<accession>B9JTG7</accession>
<protein>
    <recommendedName>
        <fullName evidence="1">Protein translocase subunit SecA</fullName>
        <ecNumber evidence="1">7.4.2.8</ecNumber>
    </recommendedName>
</protein>
<sequence>MVSLGGIARKIFGSSNERRIRGNKPRVAAINALEDSIKALSDAELAAKTEEFKGELAKGKTLDDILIPAFAVAREASRRALGMRPFDVQLIGGMILHENAIAEMKTGEGKTLVATLAVYLNALSGKGVHVVTVNDYLASRDAAIMAKLYSFLGLTTGVIVHGMNDDERREAYACDITYATNNELGFDYLRDNMKYERGQMVQRGHNYAIVDEVDSILVDEARTPLIISGPLDDRSDLYTTIDAFIPMLSAEDYEIDEKQKSANFSEVGTEKLENLLKDAGLLKGVSLYDVENVAIVHHINNALKAHKLFQRDKDYIVRNDEIVIIDEFTGRMMPGRRYSEGQHQALEAKEKVTIQPENQTLASITFQNYFRMYSKLAGMTGTANTEAEEFQDIYGLSVIEVPTNLPILRIDEDDEVYRTFEEKFKAIIEEIKASASRNQPVLVGTTSIEKSELLATMLRQSGFTDFSVLNARYHEQEAYIVSQAGVPGAVTIATNMAGRGTDIQLGGNIDMRLERDLEGMEPGPERDAKEQAIREEVKALKEKALAAGGLYVIATERHESRRIDNQLRGRSGRQGDPGRSKFYLSLQDDLMRIFGSDRMDSMLQKLGLKEGEAIVHPWINKALERAQKKVEARNFDIRKNLLKYDDVLNDQRKVIFEQRVELMDAEDLTETIDDMRHELIDTIVRTHIPEKAYAEQWDVAGLKTAMTGILNLDLPIEDWAQEEGIAEDDIVERVKKAADEVMAEKTERFGPEIMAYIERSVLLQTIDNLWREHIVNLDHLRSVVGFRGYAQRDPLQEYKAEAFELFQALLANMREGVTAQMMRVEIVREAPPEPTLPIMHGHHEDPQTGQDEFAAADGIVAPENRNPADPSTWGKVGRNEMCPCGSGKRFKHCHGALLA</sequence>
<proteinExistence type="inferred from homology"/>
<reference key="1">
    <citation type="journal article" date="2009" name="J. Bacteriol.">
        <title>Genome sequences of three Agrobacterium biovars help elucidate the evolution of multichromosome genomes in bacteria.</title>
        <authorList>
            <person name="Slater S.C."/>
            <person name="Goldman B.S."/>
            <person name="Goodner B."/>
            <person name="Setubal J.C."/>
            <person name="Farrand S.K."/>
            <person name="Nester E.W."/>
            <person name="Burr T.J."/>
            <person name="Banta L."/>
            <person name="Dickerman A.W."/>
            <person name="Paulsen I."/>
            <person name="Otten L."/>
            <person name="Suen G."/>
            <person name="Welch R."/>
            <person name="Almeida N.F."/>
            <person name="Arnold F."/>
            <person name="Burton O.T."/>
            <person name="Du Z."/>
            <person name="Ewing A."/>
            <person name="Godsy E."/>
            <person name="Heisel S."/>
            <person name="Houmiel K.L."/>
            <person name="Jhaveri J."/>
            <person name="Lu J."/>
            <person name="Miller N.M."/>
            <person name="Norton S."/>
            <person name="Chen Q."/>
            <person name="Phoolcharoen W."/>
            <person name="Ohlin V."/>
            <person name="Ondrusek D."/>
            <person name="Pride N."/>
            <person name="Stricklin S.L."/>
            <person name="Sun J."/>
            <person name="Wheeler C."/>
            <person name="Wilson L."/>
            <person name="Zhu H."/>
            <person name="Wood D.W."/>
        </authorList>
    </citation>
    <scope>NUCLEOTIDE SEQUENCE [LARGE SCALE GENOMIC DNA]</scope>
    <source>
        <strain>ATCC BAA-846 / DSM 112012 / S4</strain>
    </source>
</reference>
<keyword id="KW-0067">ATP-binding</keyword>
<keyword id="KW-0997">Cell inner membrane</keyword>
<keyword id="KW-1003">Cell membrane</keyword>
<keyword id="KW-0963">Cytoplasm</keyword>
<keyword id="KW-0472">Membrane</keyword>
<keyword id="KW-0479">Metal-binding</keyword>
<keyword id="KW-0547">Nucleotide-binding</keyword>
<keyword id="KW-0653">Protein transport</keyword>
<keyword id="KW-1185">Reference proteome</keyword>
<keyword id="KW-1278">Translocase</keyword>
<keyword id="KW-0811">Translocation</keyword>
<keyword id="KW-0813">Transport</keyword>
<keyword id="KW-0862">Zinc</keyword>
<gene>
    <name evidence="1" type="primary">secA</name>
    <name type="ordered locus">Avi_3982</name>
</gene>
<dbReference type="EC" id="7.4.2.8" evidence="1"/>
<dbReference type="EMBL" id="CP000633">
    <property type="protein sequence ID" value="ACM37875.1"/>
    <property type="molecule type" value="Genomic_DNA"/>
</dbReference>
<dbReference type="RefSeq" id="WP_015917287.1">
    <property type="nucleotide sequence ID" value="NC_011989.1"/>
</dbReference>
<dbReference type="SMR" id="B9JTG7"/>
<dbReference type="STRING" id="311402.Avi_3982"/>
<dbReference type="KEGG" id="avi:Avi_3982"/>
<dbReference type="eggNOG" id="COG0653">
    <property type="taxonomic scope" value="Bacteria"/>
</dbReference>
<dbReference type="HOGENOM" id="CLU_005314_3_0_5"/>
<dbReference type="Proteomes" id="UP000001596">
    <property type="component" value="Chromosome 1"/>
</dbReference>
<dbReference type="GO" id="GO:0031522">
    <property type="term" value="C:cell envelope Sec protein transport complex"/>
    <property type="evidence" value="ECO:0007669"/>
    <property type="project" value="TreeGrafter"/>
</dbReference>
<dbReference type="GO" id="GO:0005829">
    <property type="term" value="C:cytosol"/>
    <property type="evidence" value="ECO:0007669"/>
    <property type="project" value="TreeGrafter"/>
</dbReference>
<dbReference type="GO" id="GO:0005886">
    <property type="term" value="C:plasma membrane"/>
    <property type="evidence" value="ECO:0007669"/>
    <property type="project" value="UniProtKB-SubCell"/>
</dbReference>
<dbReference type="GO" id="GO:0005524">
    <property type="term" value="F:ATP binding"/>
    <property type="evidence" value="ECO:0007669"/>
    <property type="project" value="UniProtKB-UniRule"/>
</dbReference>
<dbReference type="GO" id="GO:0046872">
    <property type="term" value="F:metal ion binding"/>
    <property type="evidence" value="ECO:0007669"/>
    <property type="project" value="UniProtKB-KW"/>
</dbReference>
<dbReference type="GO" id="GO:0008564">
    <property type="term" value="F:protein-exporting ATPase activity"/>
    <property type="evidence" value="ECO:0007669"/>
    <property type="project" value="UniProtKB-EC"/>
</dbReference>
<dbReference type="GO" id="GO:0065002">
    <property type="term" value="P:intracellular protein transmembrane transport"/>
    <property type="evidence" value="ECO:0007669"/>
    <property type="project" value="UniProtKB-UniRule"/>
</dbReference>
<dbReference type="GO" id="GO:0017038">
    <property type="term" value="P:protein import"/>
    <property type="evidence" value="ECO:0007669"/>
    <property type="project" value="InterPro"/>
</dbReference>
<dbReference type="GO" id="GO:0006605">
    <property type="term" value="P:protein targeting"/>
    <property type="evidence" value="ECO:0007669"/>
    <property type="project" value="UniProtKB-UniRule"/>
</dbReference>
<dbReference type="GO" id="GO:0043952">
    <property type="term" value="P:protein transport by the Sec complex"/>
    <property type="evidence" value="ECO:0007669"/>
    <property type="project" value="TreeGrafter"/>
</dbReference>
<dbReference type="CDD" id="cd17928">
    <property type="entry name" value="DEXDc_SecA"/>
    <property type="match status" value="1"/>
</dbReference>
<dbReference type="CDD" id="cd18803">
    <property type="entry name" value="SF2_C_secA"/>
    <property type="match status" value="1"/>
</dbReference>
<dbReference type="FunFam" id="3.90.1440.10:FF:000001">
    <property type="entry name" value="Preprotein translocase subunit SecA"/>
    <property type="match status" value="1"/>
</dbReference>
<dbReference type="FunFam" id="1.10.3060.10:FF:000003">
    <property type="entry name" value="Protein translocase subunit SecA"/>
    <property type="match status" value="1"/>
</dbReference>
<dbReference type="FunFam" id="3.40.50.300:FF:000334">
    <property type="entry name" value="Protein translocase subunit SecA"/>
    <property type="match status" value="1"/>
</dbReference>
<dbReference type="FunFam" id="3.40.50.300:FF:001790">
    <property type="entry name" value="Protein translocase subunit SecA"/>
    <property type="match status" value="1"/>
</dbReference>
<dbReference type="Gene3D" id="1.10.3060.10">
    <property type="entry name" value="Helical scaffold and wing domains of SecA"/>
    <property type="match status" value="1"/>
</dbReference>
<dbReference type="Gene3D" id="3.40.50.300">
    <property type="entry name" value="P-loop containing nucleotide triphosphate hydrolases"/>
    <property type="match status" value="2"/>
</dbReference>
<dbReference type="Gene3D" id="3.90.1440.10">
    <property type="entry name" value="SecA, preprotein cross-linking domain"/>
    <property type="match status" value="1"/>
</dbReference>
<dbReference type="HAMAP" id="MF_01382">
    <property type="entry name" value="SecA"/>
    <property type="match status" value="1"/>
</dbReference>
<dbReference type="InterPro" id="IPR014001">
    <property type="entry name" value="Helicase_ATP-bd"/>
</dbReference>
<dbReference type="InterPro" id="IPR001650">
    <property type="entry name" value="Helicase_C-like"/>
</dbReference>
<dbReference type="InterPro" id="IPR027417">
    <property type="entry name" value="P-loop_NTPase"/>
</dbReference>
<dbReference type="InterPro" id="IPR001763">
    <property type="entry name" value="Rhodanese-like_dom"/>
</dbReference>
<dbReference type="InterPro" id="IPR004027">
    <property type="entry name" value="SEC_C_motif"/>
</dbReference>
<dbReference type="InterPro" id="IPR000185">
    <property type="entry name" value="SecA"/>
</dbReference>
<dbReference type="InterPro" id="IPR020937">
    <property type="entry name" value="SecA_CS"/>
</dbReference>
<dbReference type="InterPro" id="IPR011115">
    <property type="entry name" value="SecA_DEAD"/>
</dbReference>
<dbReference type="InterPro" id="IPR014018">
    <property type="entry name" value="SecA_motor_DEAD"/>
</dbReference>
<dbReference type="InterPro" id="IPR011130">
    <property type="entry name" value="SecA_preprotein_X-link_dom"/>
</dbReference>
<dbReference type="InterPro" id="IPR044722">
    <property type="entry name" value="SecA_SF2_C"/>
</dbReference>
<dbReference type="InterPro" id="IPR011116">
    <property type="entry name" value="SecA_Wing/Scaffold"/>
</dbReference>
<dbReference type="InterPro" id="IPR036266">
    <property type="entry name" value="SecA_Wing/Scaffold_sf"/>
</dbReference>
<dbReference type="InterPro" id="IPR036670">
    <property type="entry name" value="SecA_X-link_sf"/>
</dbReference>
<dbReference type="NCBIfam" id="NF009538">
    <property type="entry name" value="PRK12904.1"/>
    <property type="match status" value="1"/>
</dbReference>
<dbReference type="NCBIfam" id="TIGR00963">
    <property type="entry name" value="secA"/>
    <property type="match status" value="1"/>
</dbReference>
<dbReference type="PANTHER" id="PTHR30612:SF0">
    <property type="entry name" value="CHLOROPLAST PROTEIN-TRANSPORTING ATPASE"/>
    <property type="match status" value="1"/>
</dbReference>
<dbReference type="PANTHER" id="PTHR30612">
    <property type="entry name" value="SECA INNER MEMBRANE COMPONENT OF SEC PROTEIN SECRETION SYSTEM"/>
    <property type="match status" value="1"/>
</dbReference>
<dbReference type="Pfam" id="PF21090">
    <property type="entry name" value="P-loop_SecA"/>
    <property type="match status" value="1"/>
</dbReference>
<dbReference type="Pfam" id="PF02810">
    <property type="entry name" value="SEC-C"/>
    <property type="match status" value="1"/>
</dbReference>
<dbReference type="Pfam" id="PF07517">
    <property type="entry name" value="SecA_DEAD"/>
    <property type="match status" value="1"/>
</dbReference>
<dbReference type="Pfam" id="PF01043">
    <property type="entry name" value="SecA_PP_bind"/>
    <property type="match status" value="1"/>
</dbReference>
<dbReference type="Pfam" id="PF07516">
    <property type="entry name" value="SecA_SW"/>
    <property type="match status" value="1"/>
</dbReference>
<dbReference type="PRINTS" id="PR00906">
    <property type="entry name" value="SECA"/>
</dbReference>
<dbReference type="SMART" id="SM00957">
    <property type="entry name" value="SecA_DEAD"/>
    <property type="match status" value="1"/>
</dbReference>
<dbReference type="SMART" id="SM00958">
    <property type="entry name" value="SecA_PP_bind"/>
    <property type="match status" value="1"/>
</dbReference>
<dbReference type="SUPFAM" id="SSF81886">
    <property type="entry name" value="Helical scaffold and wing domains of SecA"/>
    <property type="match status" value="1"/>
</dbReference>
<dbReference type="SUPFAM" id="SSF52540">
    <property type="entry name" value="P-loop containing nucleoside triphosphate hydrolases"/>
    <property type="match status" value="2"/>
</dbReference>
<dbReference type="SUPFAM" id="SSF81767">
    <property type="entry name" value="Pre-protein crosslinking domain of SecA"/>
    <property type="match status" value="1"/>
</dbReference>
<dbReference type="PROSITE" id="PS01312">
    <property type="entry name" value="SECA"/>
    <property type="match status" value="1"/>
</dbReference>
<dbReference type="PROSITE" id="PS51196">
    <property type="entry name" value="SECA_MOTOR_DEAD"/>
    <property type="match status" value="1"/>
</dbReference>
<feature type="chain" id="PRO_1000184212" description="Protein translocase subunit SecA">
    <location>
        <begin position="1"/>
        <end position="899"/>
    </location>
</feature>
<feature type="binding site" evidence="1">
    <location>
        <position position="89"/>
    </location>
    <ligand>
        <name>ATP</name>
        <dbReference type="ChEBI" id="CHEBI:30616"/>
    </ligand>
</feature>
<feature type="binding site" evidence="1">
    <location>
        <begin position="107"/>
        <end position="111"/>
    </location>
    <ligand>
        <name>ATP</name>
        <dbReference type="ChEBI" id="CHEBI:30616"/>
    </ligand>
</feature>
<feature type="binding site" evidence="1">
    <location>
        <position position="502"/>
    </location>
    <ligand>
        <name>ATP</name>
        <dbReference type="ChEBI" id="CHEBI:30616"/>
    </ligand>
</feature>
<feature type="binding site" evidence="1">
    <location>
        <position position="882"/>
    </location>
    <ligand>
        <name>Zn(2+)</name>
        <dbReference type="ChEBI" id="CHEBI:29105"/>
    </ligand>
</feature>
<feature type="binding site" evidence="1">
    <location>
        <position position="884"/>
    </location>
    <ligand>
        <name>Zn(2+)</name>
        <dbReference type="ChEBI" id="CHEBI:29105"/>
    </ligand>
</feature>
<feature type="binding site" evidence="1">
    <location>
        <position position="893"/>
    </location>
    <ligand>
        <name>Zn(2+)</name>
        <dbReference type="ChEBI" id="CHEBI:29105"/>
    </ligand>
</feature>
<feature type="binding site" evidence="1">
    <location>
        <position position="894"/>
    </location>
    <ligand>
        <name>Zn(2+)</name>
        <dbReference type="ChEBI" id="CHEBI:29105"/>
    </ligand>
</feature>
<name>SECA_ALLAM</name>
<organism>
    <name type="scientific">Allorhizobium ampelinum (strain ATCC BAA-846 / DSM 112012 / S4)</name>
    <name type="common">Agrobacterium vitis (strain S4)</name>
    <dbReference type="NCBI Taxonomy" id="311402"/>
    <lineage>
        <taxon>Bacteria</taxon>
        <taxon>Pseudomonadati</taxon>
        <taxon>Pseudomonadota</taxon>
        <taxon>Alphaproteobacteria</taxon>
        <taxon>Hyphomicrobiales</taxon>
        <taxon>Rhizobiaceae</taxon>
        <taxon>Rhizobium/Agrobacterium group</taxon>
        <taxon>Allorhizobium</taxon>
        <taxon>Allorhizobium ampelinum</taxon>
    </lineage>
</organism>
<comment type="function">
    <text evidence="1">Part of the Sec protein translocase complex. Interacts with the SecYEG preprotein conducting channel. Has a central role in coupling the hydrolysis of ATP to the transfer of proteins into and across the cell membrane, serving both as a receptor for the preprotein-SecB complex and as an ATP-driven molecular motor driving the stepwise translocation of polypeptide chains across the membrane.</text>
</comment>
<comment type="catalytic activity">
    <reaction evidence="1">
        <text>ATP + H2O + cellular proteinSide 1 = ADP + phosphate + cellular proteinSide 2.</text>
        <dbReference type="EC" id="7.4.2.8"/>
    </reaction>
</comment>
<comment type="cofactor">
    <cofactor evidence="1">
        <name>Zn(2+)</name>
        <dbReference type="ChEBI" id="CHEBI:29105"/>
    </cofactor>
    <text evidence="1">May bind 1 zinc ion per subunit.</text>
</comment>
<comment type="subunit">
    <text evidence="1">Monomer and homodimer. Part of the essential Sec protein translocation apparatus which comprises SecA, SecYEG and auxiliary proteins SecDF-YajC and YidC.</text>
</comment>
<comment type="subcellular location">
    <subcellularLocation>
        <location evidence="1">Cell inner membrane</location>
        <topology evidence="1">Peripheral membrane protein</topology>
        <orientation evidence="1">Cytoplasmic side</orientation>
    </subcellularLocation>
    <subcellularLocation>
        <location evidence="1">Cytoplasm</location>
    </subcellularLocation>
    <text evidence="1">Distribution is 50-50.</text>
</comment>
<comment type="similarity">
    <text evidence="1">Belongs to the SecA family.</text>
</comment>
<evidence type="ECO:0000255" key="1">
    <source>
        <dbReference type="HAMAP-Rule" id="MF_01382"/>
    </source>
</evidence>